<gene>
    <name evidence="6" type="primary">CPK14</name>
    <name evidence="9" type="ordered locus">Os05g0491900</name>
    <name evidence="7" type="ordered locus">LOC_Os05g41270</name>
    <name evidence="10" type="ORF">OsJ_19030</name>
    <name evidence="8" type="ORF">OSJNBa0088I06.13</name>
</gene>
<keyword id="KW-0067">ATP-binding</keyword>
<keyword id="KW-0106">Calcium</keyword>
<keyword id="KW-0418">Kinase</keyword>
<keyword id="KW-0449">Lipoprotein</keyword>
<keyword id="KW-0472">Membrane</keyword>
<keyword id="KW-0479">Metal-binding</keyword>
<keyword id="KW-0519">Myristate</keyword>
<keyword id="KW-0547">Nucleotide-binding</keyword>
<keyword id="KW-1185">Reference proteome</keyword>
<keyword id="KW-0677">Repeat</keyword>
<keyword id="KW-0723">Serine/threonine-protein kinase</keyword>
<keyword id="KW-0808">Transferase</keyword>
<proteinExistence type="inferred from homology"/>
<protein>
    <recommendedName>
        <fullName evidence="7">Calcium-dependent protein kinase 14</fullName>
        <shortName evidence="7">OsCDPK14</shortName>
        <shortName evidence="6">OsCPK14</shortName>
        <ecNumber evidence="7">2.7.11.1</ecNumber>
    </recommendedName>
</protein>
<feature type="initiator methionine" description="Removed" evidence="2">
    <location>
        <position position="1"/>
    </location>
</feature>
<feature type="chain" id="PRO_0000437558" description="Calcium-dependent protein kinase 14">
    <location>
        <begin position="2"/>
        <end position="522"/>
    </location>
</feature>
<feature type="domain" description="Protein kinase" evidence="3">
    <location>
        <begin position="68"/>
        <end position="326"/>
    </location>
</feature>
<feature type="domain" description="EF-hand 1" evidence="4">
    <location>
        <begin position="369"/>
        <end position="404"/>
    </location>
</feature>
<feature type="domain" description="EF-hand 2" evidence="4">
    <location>
        <begin position="405"/>
        <end position="440"/>
    </location>
</feature>
<feature type="domain" description="EF-hand 3" evidence="4">
    <location>
        <begin position="441"/>
        <end position="476"/>
    </location>
</feature>
<feature type="domain" description="EF-hand 4" evidence="4">
    <location>
        <begin position="480"/>
        <end position="511"/>
    </location>
</feature>
<feature type="region of interest" description="Disordered" evidence="5">
    <location>
        <begin position="1"/>
        <end position="58"/>
    </location>
</feature>
<feature type="region of interest" description="Autoinhibitory domain" evidence="1">
    <location>
        <begin position="332"/>
        <end position="362"/>
    </location>
</feature>
<feature type="compositionally biased region" description="Low complexity" evidence="5">
    <location>
        <begin position="1"/>
        <end position="12"/>
    </location>
</feature>
<feature type="compositionally biased region" description="Low complexity" evidence="5">
    <location>
        <begin position="19"/>
        <end position="45"/>
    </location>
</feature>
<feature type="active site" description="Proton acceptor" evidence="3">
    <location>
        <position position="192"/>
    </location>
</feature>
<feature type="binding site" evidence="3">
    <location>
        <begin position="74"/>
        <end position="82"/>
    </location>
    <ligand>
        <name>ATP</name>
        <dbReference type="ChEBI" id="CHEBI:30616"/>
    </ligand>
</feature>
<feature type="binding site" evidence="3">
    <location>
        <position position="97"/>
    </location>
    <ligand>
        <name>ATP</name>
        <dbReference type="ChEBI" id="CHEBI:30616"/>
    </ligand>
</feature>
<feature type="binding site" evidence="4">
    <location>
        <position position="382"/>
    </location>
    <ligand>
        <name>Ca(2+)</name>
        <dbReference type="ChEBI" id="CHEBI:29108"/>
        <label>1</label>
    </ligand>
</feature>
<feature type="binding site" evidence="4">
    <location>
        <position position="384"/>
    </location>
    <ligand>
        <name>Ca(2+)</name>
        <dbReference type="ChEBI" id="CHEBI:29108"/>
        <label>1</label>
    </ligand>
</feature>
<feature type="binding site" evidence="4">
    <location>
        <position position="386"/>
    </location>
    <ligand>
        <name>Ca(2+)</name>
        <dbReference type="ChEBI" id="CHEBI:29108"/>
        <label>1</label>
    </ligand>
</feature>
<feature type="binding site" evidence="4">
    <location>
        <position position="388"/>
    </location>
    <ligand>
        <name>Ca(2+)</name>
        <dbReference type="ChEBI" id="CHEBI:29108"/>
        <label>1</label>
    </ligand>
</feature>
<feature type="binding site" evidence="4">
    <location>
        <position position="393"/>
    </location>
    <ligand>
        <name>Ca(2+)</name>
        <dbReference type="ChEBI" id="CHEBI:29108"/>
        <label>1</label>
    </ligand>
</feature>
<feature type="binding site" evidence="4">
    <location>
        <position position="418"/>
    </location>
    <ligand>
        <name>Ca(2+)</name>
        <dbReference type="ChEBI" id="CHEBI:29108"/>
        <label>2</label>
    </ligand>
</feature>
<feature type="binding site" evidence="4">
    <location>
        <position position="420"/>
    </location>
    <ligand>
        <name>Ca(2+)</name>
        <dbReference type="ChEBI" id="CHEBI:29108"/>
        <label>2</label>
    </ligand>
</feature>
<feature type="binding site" evidence="4">
    <location>
        <position position="422"/>
    </location>
    <ligand>
        <name>Ca(2+)</name>
        <dbReference type="ChEBI" id="CHEBI:29108"/>
        <label>2</label>
    </ligand>
</feature>
<feature type="binding site" evidence="4">
    <location>
        <position position="424"/>
    </location>
    <ligand>
        <name>Ca(2+)</name>
        <dbReference type="ChEBI" id="CHEBI:29108"/>
        <label>2</label>
    </ligand>
</feature>
<feature type="binding site" evidence="4">
    <location>
        <position position="429"/>
    </location>
    <ligand>
        <name>Ca(2+)</name>
        <dbReference type="ChEBI" id="CHEBI:29108"/>
        <label>2</label>
    </ligand>
</feature>
<feature type="binding site" evidence="4">
    <location>
        <position position="454"/>
    </location>
    <ligand>
        <name>Ca(2+)</name>
        <dbReference type="ChEBI" id="CHEBI:29108"/>
        <label>3</label>
    </ligand>
</feature>
<feature type="binding site" evidence="4">
    <location>
        <position position="456"/>
    </location>
    <ligand>
        <name>Ca(2+)</name>
        <dbReference type="ChEBI" id="CHEBI:29108"/>
        <label>3</label>
    </ligand>
</feature>
<feature type="binding site" evidence="4">
    <location>
        <position position="458"/>
    </location>
    <ligand>
        <name>Ca(2+)</name>
        <dbReference type="ChEBI" id="CHEBI:29108"/>
        <label>3</label>
    </ligand>
</feature>
<feature type="binding site" evidence="4">
    <location>
        <position position="460"/>
    </location>
    <ligand>
        <name>Ca(2+)</name>
        <dbReference type="ChEBI" id="CHEBI:29108"/>
        <label>3</label>
    </ligand>
</feature>
<feature type="binding site" evidence="4">
    <location>
        <position position="465"/>
    </location>
    <ligand>
        <name>Ca(2+)</name>
        <dbReference type="ChEBI" id="CHEBI:29108"/>
        <label>3</label>
    </ligand>
</feature>
<feature type="binding site" evidence="4">
    <location>
        <position position="489"/>
    </location>
    <ligand>
        <name>Ca(2+)</name>
        <dbReference type="ChEBI" id="CHEBI:29108"/>
        <label>4</label>
    </ligand>
</feature>
<feature type="binding site" evidence="4">
    <location>
        <position position="491"/>
    </location>
    <ligand>
        <name>Ca(2+)</name>
        <dbReference type="ChEBI" id="CHEBI:29108"/>
        <label>4</label>
    </ligand>
</feature>
<feature type="binding site" evidence="4">
    <location>
        <position position="493"/>
    </location>
    <ligand>
        <name>Ca(2+)</name>
        <dbReference type="ChEBI" id="CHEBI:29108"/>
        <label>4</label>
    </ligand>
</feature>
<feature type="binding site" evidence="4">
    <location>
        <position position="495"/>
    </location>
    <ligand>
        <name>Ca(2+)</name>
        <dbReference type="ChEBI" id="CHEBI:29108"/>
        <label>4</label>
    </ligand>
</feature>
<feature type="binding site" evidence="4">
    <location>
        <position position="500"/>
    </location>
    <ligand>
        <name>Ca(2+)</name>
        <dbReference type="ChEBI" id="CHEBI:29108"/>
        <label>4</label>
    </ligand>
</feature>
<feature type="lipid moiety-binding region" description="N-myristoyl glycine" evidence="2">
    <location>
        <position position="2"/>
    </location>
</feature>
<organism>
    <name type="scientific">Oryza sativa subsp. japonica</name>
    <name type="common">Rice</name>
    <dbReference type="NCBI Taxonomy" id="39947"/>
    <lineage>
        <taxon>Eukaryota</taxon>
        <taxon>Viridiplantae</taxon>
        <taxon>Streptophyta</taxon>
        <taxon>Embryophyta</taxon>
        <taxon>Tracheophyta</taxon>
        <taxon>Spermatophyta</taxon>
        <taxon>Magnoliopsida</taxon>
        <taxon>Liliopsida</taxon>
        <taxon>Poales</taxon>
        <taxon>Poaceae</taxon>
        <taxon>BOP clade</taxon>
        <taxon>Oryzoideae</taxon>
        <taxon>Oryzeae</taxon>
        <taxon>Oryzinae</taxon>
        <taxon>Oryza</taxon>
        <taxon>Oryza sativa</taxon>
    </lineage>
</organism>
<sequence>MGNCCPPGSSSEPDPPPASSGSSRPAGSAGAAASPATISPSAAPAPAKPPAPIGPVLGRPMEDVKSIYTVGKELGRGQFGVTSLCTHKATGQRFACKTISKRKLSTKEDVEDVRREVQIMYHLAGQPGVVELKGAYEDKHAVHLVMELCAGGELFDRIIAKGHYTEHAASSLLRTIVEIIHTCHSMGVIHRDLKPENFLLLSKDEHAPLKATDFGLSVFFKEGEVFRDIVGSAYYIAPEVLKRSYGPEADIWSIGVMLYILLCGVPPFWAESEHGIFNSILRGHVDFSSEPWSRISHGAKDLVRRMLHSDPKQRISAYDVLNHPWIKEDGEAPDTPLDNAVLGRLKQFRAMNQFKKAALRVIAGCLSEEEIRGLKEMFKSMDSDNSGTITVDELRKGLAKKGTKLTEAEVQQLMEAADADGNGTIDYEEFITATMHMNRMDREEHLYTAFQYFDKDNSGYITIEELEQALREKGLMDGREIKDIISEVDADNDGRINYTEFVAMMRKGDPEANPKKRRDVVL</sequence>
<dbReference type="EC" id="2.7.11.1" evidence="7"/>
<dbReference type="EMBL" id="AC129718">
    <property type="protein sequence ID" value="AAT69647.1"/>
    <property type="status" value="ALT_SEQ"/>
    <property type="molecule type" value="Genomic_DNA"/>
</dbReference>
<dbReference type="EMBL" id="AP008211">
    <property type="protein sequence ID" value="BAF17826.1"/>
    <property type="status" value="ALT_SEQ"/>
    <property type="molecule type" value="Genomic_DNA"/>
</dbReference>
<dbReference type="EMBL" id="AP014961">
    <property type="protein sequence ID" value="BAS94668.1"/>
    <property type="status" value="ALT_SEQ"/>
    <property type="molecule type" value="Genomic_DNA"/>
</dbReference>
<dbReference type="EMBL" id="CM000142">
    <property type="protein sequence ID" value="EEE64198.1"/>
    <property type="molecule type" value="Genomic_DNA"/>
</dbReference>
<dbReference type="RefSeq" id="XP_015638654.1">
    <property type="nucleotide sequence ID" value="XM_015783168.1"/>
</dbReference>
<dbReference type="SMR" id="B9FKW9"/>
<dbReference type="FunCoup" id="B9FKW9">
    <property type="interactions" value="1765"/>
</dbReference>
<dbReference type="STRING" id="39947.B9FKW9"/>
<dbReference type="PaxDb" id="39947-B9FKW9"/>
<dbReference type="KEGG" id="dosa:Os05g0491900"/>
<dbReference type="InParanoid" id="B9FKW9"/>
<dbReference type="OrthoDB" id="40902at2759"/>
<dbReference type="Proteomes" id="UP000000763">
    <property type="component" value="Chromosome 5"/>
</dbReference>
<dbReference type="Proteomes" id="UP000007752">
    <property type="component" value="Chromosome 5"/>
</dbReference>
<dbReference type="Proteomes" id="UP000059680">
    <property type="component" value="Chromosome 5"/>
</dbReference>
<dbReference type="GO" id="GO:0005737">
    <property type="term" value="C:cytoplasm"/>
    <property type="evidence" value="ECO:0000318"/>
    <property type="project" value="GO_Central"/>
</dbReference>
<dbReference type="GO" id="GO:0016020">
    <property type="term" value="C:membrane"/>
    <property type="evidence" value="ECO:0007669"/>
    <property type="project" value="UniProtKB-SubCell"/>
</dbReference>
<dbReference type="GO" id="GO:0005634">
    <property type="term" value="C:nucleus"/>
    <property type="evidence" value="ECO:0000318"/>
    <property type="project" value="GO_Central"/>
</dbReference>
<dbReference type="GO" id="GO:0005524">
    <property type="term" value="F:ATP binding"/>
    <property type="evidence" value="ECO:0007669"/>
    <property type="project" value="UniProtKB-KW"/>
</dbReference>
<dbReference type="GO" id="GO:0005509">
    <property type="term" value="F:calcium ion binding"/>
    <property type="evidence" value="ECO:0007669"/>
    <property type="project" value="InterPro"/>
</dbReference>
<dbReference type="GO" id="GO:0009931">
    <property type="term" value="F:calcium-dependent protein serine/threonine kinase activity"/>
    <property type="evidence" value="ECO:0000318"/>
    <property type="project" value="GO_Central"/>
</dbReference>
<dbReference type="GO" id="GO:0004683">
    <property type="term" value="F:calcium/calmodulin-dependent protein kinase activity"/>
    <property type="evidence" value="ECO:0000318"/>
    <property type="project" value="GO_Central"/>
</dbReference>
<dbReference type="GO" id="GO:0005516">
    <property type="term" value="F:calmodulin binding"/>
    <property type="evidence" value="ECO:0000318"/>
    <property type="project" value="GO_Central"/>
</dbReference>
<dbReference type="GO" id="GO:0106310">
    <property type="term" value="F:protein serine kinase activity"/>
    <property type="evidence" value="ECO:0007669"/>
    <property type="project" value="RHEA"/>
</dbReference>
<dbReference type="GO" id="GO:0035556">
    <property type="term" value="P:intracellular signal transduction"/>
    <property type="evidence" value="ECO:0000318"/>
    <property type="project" value="GO_Central"/>
</dbReference>
<dbReference type="CDD" id="cd05117">
    <property type="entry name" value="STKc_CAMK"/>
    <property type="match status" value="1"/>
</dbReference>
<dbReference type="FunFam" id="1.10.238.10:FF:000015">
    <property type="entry name" value="Calcium-dependent protein kinase 1"/>
    <property type="match status" value="1"/>
</dbReference>
<dbReference type="FunFam" id="3.30.200.20:FF:000004">
    <property type="entry name" value="Calcium-dependent protein kinase 1"/>
    <property type="match status" value="1"/>
</dbReference>
<dbReference type="FunFam" id="1.10.510.10:FF:000056">
    <property type="entry name" value="calcium-dependent protein kinase 1"/>
    <property type="match status" value="1"/>
</dbReference>
<dbReference type="Gene3D" id="1.10.238.10">
    <property type="entry name" value="EF-hand"/>
    <property type="match status" value="1"/>
</dbReference>
<dbReference type="Gene3D" id="3.30.200.20">
    <property type="entry name" value="Phosphorylase Kinase, domain 1"/>
    <property type="match status" value="1"/>
</dbReference>
<dbReference type="Gene3D" id="1.10.510.10">
    <property type="entry name" value="Transferase(Phosphotransferase) domain 1"/>
    <property type="match status" value="1"/>
</dbReference>
<dbReference type="InterPro" id="IPR050205">
    <property type="entry name" value="CDPK_Ser/Thr_kinases"/>
</dbReference>
<dbReference type="InterPro" id="IPR011992">
    <property type="entry name" value="EF-hand-dom_pair"/>
</dbReference>
<dbReference type="InterPro" id="IPR018247">
    <property type="entry name" value="EF_Hand_1_Ca_BS"/>
</dbReference>
<dbReference type="InterPro" id="IPR002048">
    <property type="entry name" value="EF_hand_dom"/>
</dbReference>
<dbReference type="InterPro" id="IPR011009">
    <property type="entry name" value="Kinase-like_dom_sf"/>
</dbReference>
<dbReference type="InterPro" id="IPR000719">
    <property type="entry name" value="Prot_kinase_dom"/>
</dbReference>
<dbReference type="InterPro" id="IPR017441">
    <property type="entry name" value="Protein_kinase_ATP_BS"/>
</dbReference>
<dbReference type="InterPro" id="IPR008271">
    <property type="entry name" value="Ser/Thr_kinase_AS"/>
</dbReference>
<dbReference type="PANTHER" id="PTHR24349">
    <property type="entry name" value="SERINE/THREONINE-PROTEIN KINASE"/>
    <property type="match status" value="1"/>
</dbReference>
<dbReference type="Pfam" id="PF13499">
    <property type="entry name" value="EF-hand_7"/>
    <property type="match status" value="2"/>
</dbReference>
<dbReference type="Pfam" id="PF00069">
    <property type="entry name" value="Pkinase"/>
    <property type="match status" value="1"/>
</dbReference>
<dbReference type="SMART" id="SM00054">
    <property type="entry name" value="EFh"/>
    <property type="match status" value="4"/>
</dbReference>
<dbReference type="SMART" id="SM00220">
    <property type="entry name" value="S_TKc"/>
    <property type="match status" value="1"/>
</dbReference>
<dbReference type="SUPFAM" id="SSF47473">
    <property type="entry name" value="EF-hand"/>
    <property type="match status" value="1"/>
</dbReference>
<dbReference type="SUPFAM" id="SSF56112">
    <property type="entry name" value="Protein kinase-like (PK-like)"/>
    <property type="match status" value="1"/>
</dbReference>
<dbReference type="PROSITE" id="PS00018">
    <property type="entry name" value="EF_HAND_1"/>
    <property type="match status" value="4"/>
</dbReference>
<dbReference type="PROSITE" id="PS50222">
    <property type="entry name" value="EF_HAND_2"/>
    <property type="match status" value="4"/>
</dbReference>
<dbReference type="PROSITE" id="PS00107">
    <property type="entry name" value="PROTEIN_KINASE_ATP"/>
    <property type="match status" value="1"/>
</dbReference>
<dbReference type="PROSITE" id="PS50011">
    <property type="entry name" value="PROTEIN_KINASE_DOM"/>
    <property type="match status" value="1"/>
</dbReference>
<dbReference type="PROSITE" id="PS00108">
    <property type="entry name" value="PROTEIN_KINASE_ST"/>
    <property type="match status" value="1"/>
</dbReference>
<name>CDPKE_ORYSJ</name>
<evidence type="ECO:0000250" key="1">
    <source>
        <dbReference type="UniProtKB" id="Q06850"/>
    </source>
</evidence>
<evidence type="ECO:0000255" key="2"/>
<evidence type="ECO:0000255" key="3">
    <source>
        <dbReference type="PROSITE-ProRule" id="PRU00159"/>
    </source>
</evidence>
<evidence type="ECO:0000255" key="4">
    <source>
        <dbReference type="PROSITE-ProRule" id="PRU00448"/>
    </source>
</evidence>
<evidence type="ECO:0000256" key="5">
    <source>
        <dbReference type="SAM" id="MobiDB-lite"/>
    </source>
</evidence>
<evidence type="ECO:0000303" key="6">
    <source>
    </source>
</evidence>
<evidence type="ECO:0000305" key="7"/>
<evidence type="ECO:0000312" key="8">
    <source>
        <dbReference type="EMBL" id="AAT69647.1"/>
    </source>
</evidence>
<evidence type="ECO:0000312" key="9">
    <source>
        <dbReference type="EMBL" id="BAF17826.1"/>
    </source>
</evidence>
<evidence type="ECO:0000312" key="10">
    <source>
        <dbReference type="EMBL" id="EEE64198.1"/>
    </source>
</evidence>
<comment type="function">
    <text evidence="1">May play a role in signal transduction pathways that involve calcium as a second messenger.</text>
</comment>
<comment type="catalytic activity">
    <reaction evidence="7">
        <text>L-seryl-[protein] + ATP = O-phospho-L-seryl-[protein] + ADP + H(+)</text>
        <dbReference type="Rhea" id="RHEA:17989"/>
        <dbReference type="Rhea" id="RHEA-COMP:9863"/>
        <dbReference type="Rhea" id="RHEA-COMP:11604"/>
        <dbReference type="ChEBI" id="CHEBI:15378"/>
        <dbReference type="ChEBI" id="CHEBI:29999"/>
        <dbReference type="ChEBI" id="CHEBI:30616"/>
        <dbReference type="ChEBI" id="CHEBI:83421"/>
        <dbReference type="ChEBI" id="CHEBI:456216"/>
        <dbReference type="EC" id="2.7.11.1"/>
    </reaction>
</comment>
<comment type="catalytic activity">
    <reaction evidence="7">
        <text>L-threonyl-[protein] + ATP = O-phospho-L-threonyl-[protein] + ADP + H(+)</text>
        <dbReference type="Rhea" id="RHEA:46608"/>
        <dbReference type="Rhea" id="RHEA-COMP:11060"/>
        <dbReference type="Rhea" id="RHEA-COMP:11605"/>
        <dbReference type="ChEBI" id="CHEBI:15378"/>
        <dbReference type="ChEBI" id="CHEBI:30013"/>
        <dbReference type="ChEBI" id="CHEBI:30616"/>
        <dbReference type="ChEBI" id="CHEBI:61977"/>
        <dbReference type="ChEBI" id="CHEBI:456216"/>
        <dbReference type="EC" id="2.7.11.1"/>
    </reaction>
</comment>
<comment type="activity regulation">
    <text evidence="1">Activated by calcium. Autophosphorylation may play an important role in the regulation of the kinase activity.</text>
</comment>
<comment type="subcellular location">
    <subcellularLocation>
        <location evidence="7">Membrane</location>
        <topology evidence="7">Lipid-anchor</topology>
    </subcellularLocation>
</comment>
<comment type="domain">
    <text evidence="1">There are 3 contiguous domains conserved in the CDPK subfamily: a kinase domain, an autoinhibitory (junction) domain and a calmodulin-like domain. The autoinhibitory domain (332-362) inactivates kinase activity under calcium-free conditions.</text>
</comment>
<comment type="similarity">
    <text evidence="7">Belongs to the protein kinase superfamily. Ser/Thr protein kinase family. CDPK subfamily.</text>
</comment>
<comment type="sequence caution" evidence="7">
    <conflict type="erroneous gene model prediction">
        <sequence resource="EMBL-CDS" id="AAT69647"/>
    </conflict>
</comment>
<comment type="sequence caution" evidence="7">
    <conflict type="erroneous gene model prediction">
        <sequence resource="EMBL-CDS" id="BAF17826"/>
    </conflict>
</comment>
<comment type="sequence caution" evidence="7">
    <conflict type="erroneous gene model prediction">
        <sequence resource="EMBL-CDS" id="BAS94668"/>
    </conflict>
</comment>
<reference key="1">
    <citation type="journal article" date="2005" name="Mol. Genet. Genomics">
        <title>A fine physical map of the rice chromosome 5.</title>
        <authorList>
            <person name="Cheng C.-H."/>
            <person name="Chung M.C."/>
            <person name="Liu S.-M."/>
            <person name="Chen S.-K."/>
            <person name="Kao F.Y."/>
            <person name="Lin S.-J."/>
            <person name="Hsiao S.-H."/>
            <person name="Tseng I.C."/>
            <person name="Hsing Y.-I.C."/>
            <person name="Wu H.-P."/>
            <person name="Chen C.-S."/>
            <person name="Shaw J.-F."/>
            <person name="Wu J."/>
            <person name="Matsumoto T."/>
            <person name="Sasaki T."/>
            <person name="Chen H.-C."/>
            <person name="Chow T.-Y."/>
        </authorList>
    </citation>
    <scope>NUCLEOTIDE SEQUENCE [LARGE SCALE GENOMIC DNA]</scope>
    <source>
        <strain>cv. Nipponbare</strain>
    </source>
</reference>
<reference key="2">
    <citation type="journal article" date="2005" name="Nature">
        <title>The map-based sequence of the rice genome.</title>
        <authorList>
            <consortium name="International rice genome sequencing project (IRGSP)"/>
        </authorList>
    </citation>
    <scope>NUCLEOTIDE SEQUENCE [LARGE SCALE GENOMIC DNA]</scope>
    <source>
        <strain>cv. Nipponbare</strain>
    </source>
</reference>
<reference key="3">
    <citation type="journal article" date="2008" name="Nucleic Acids Res.">
        <title>The rice annotation project database (RAP-DB): 2008 update.</title>
        <authorList>
            <consortium name="The rice annotation project (RAP)"/>
        </authorList>
    </citation>
    <scope>GENOME REANNOTATION</scope>
    <source>
        <strain>cv. Nipponbare</strain>
    </source>
</reference>
<reference key="4">
    <citation type="journal article" date="2013" name="Rice">
        <title>Improvement of the Oryza sativa Nipponbare reference genome using next generation sequence and optical map data.</title>
        <authorList>
            <person name="Kawahara Y."/>
            <person name="de la Bastide M."/>
            <person name="Hamilton J.P."/>
            <person name="Kanamori H."/>
            <person name="McCombie W.R."/>
            <person name="Ouyang S."/>
            <person name="Schwartz D.C."/>
            <person name="Tanaka T."/>
            <person name="Wu J."/>
            <person name="Zhou S."/>
            <person name="Childs K.L."/>
            <person name="Davidson R.M."/>
            <person name="Lin H."/>
            <person name="Quesada-Ocampo L."/>
            <person name="Vaillancourt B."/>
            <person name="Sakai H."/>
            <person name="Lee S.S."/>
            <person name="Kim J."/>
            <person name="Numa H."/>
            <person name="Itoh T."/>
            <person name="Buell C.R."/>
            <person name="Matsumoto T."/>
        </authorList>
    </citation>
    <scope>GENOME REANNOTATION</scope>
    <source>
        <strain>cv. Nipponbare</strain>
    </source>
</reference>
<reference key="5">
    <citation type="journal article" date="2005" name="PLoS Biol.">
        <title>The genomes of Oryza sativa: a history of duplications.</title>
        <authorList>
            <person name="Yu J."/>
            <person name="Wang J."/>
            <person name="Lin W."/>
            <person name="Li S."/>
            <person name="Li H."/>
            <person name="Zhou J."/>
            <person name="Ni P."/>
            <person name="Dong W."/>
            <person name="Hu S."/>
            <person name="Zeng C."/>
            <person name="Zhang J."/>
            <person name="Zhang Y."/>
            <person name="Li R."/>
            <person name="Xu Z."/>
            <person name="Li S."/>
            <person name="Li X."/>
            <person name="Zheng H."/>
            <person name="Cong L."/>
            <person name="Lin L."/>
            <person name="Yin J."/>
            <person name="Geng J."/>
            <person name="Li G."/>
            <person name="Shi J."/>
            <person name="Liu J."/>
            <person name="Lv H."/>
            <person name="Li J."/>
            <person name="Wang J."/>
            <person name="Deng Y."/>
            <person name="Ran L."/>
            <person name="Shi X."/>
            <person name="Wang X."/>
            <person name="Wu Q."/>
            <person name="Li C."/>
            <person name="Ren X."/>
            <person name="Wang J."/>
            <person name="Wang X."/>
            <person name="Li D."/>
            <person name="Liu D."/>
            <person name="Zhang X."/>
            <person name="Ji Z."/>
            <person name="Zhao W."/>
            <person name="Sun Y."/>
            <person name="Zhang Z."/>
            <person name="Bao J."/>
            <person name="Han Y."/>
            <person name="Dong L."/>
            <person name="Ji J."/>
            <person name="Chen P."/>
            <person name="Wu S."/>
            <person name="Liu J."/>
            <person name="Xiao Y."/>
            <person name="Bu D."/>
            <person name="Tan J."/>
            <person name="Yang L."/>
            <person name="Ye C."/>
            <person name="Zhang J."/>
            <person name="Xu J."/>
            <person name="Zhou Y."/>
            <person name="Yu Y."/>
            <person name="Zhang B."/>
            <person name="Zhuang S."/>
            <person name="Wei H."/>
            <person name="Liu B."/>
            <person name="Lei M."/>
            <person name="Yu H."/>
            <person name="Li Y."/>
            <person name="Xu H."/>
            <person name="Wei S."/>
            <person name="He X."/>
            <person name="Fang L."/>
            <person name="Zhang Z."/>
            <person name="Zhang Y."/>
            <person name="Huang X."/>
            <person name="Su Z."/>
            <person name="Tong W."/>
            <person name="Li J."/>
            <person name="Tong Z."/>
            <person name="Li S."/>
            <person name="Ye J."/>
            <person name="Wang L."/>
            <person name="Fang L."/>
            <person name="Lei T."/>
            <person name="Chen C.-S."/>
            <person name="Chen H.-C."/>
            <person name="Xu Z."/>
            <person name="Li H."/>
            <person name="Huang H."/>
            <person name="Zhang F."/>
            <person name="Xu H."/>
            <person name="Li N."/>
            <person name="Zhao C."/>
            <person name="Li S."/>
            <person name="Dong L."/>
            <person name="Huang Y."/>
            <person name="Li L."/>
            <person name="Xi Y."/>
            <person name="Qi Q."/>
            <person name="Li W."/>
            <person name="Zhang B."/>
            <person name="Hu W."/>
            <person name="Zhang Y."/>
            <person name="Tian X."/>
            <person name="Jiao Y."/>
            <person name="Liang X."/>
            <person name="Jin J."/>
            <person name="Gao L."/>
            <person name="Zheng W."/>
            <person name="Hao B."/>
            <person name="Liu S.-M."/>
            <person name="Wang W."/>
            <person name="Yuan L."/>
            <person name="Cao M."/>
            <person name="McDermott J."/>
            <person name="Samudrala R."/>
            <person name="Wang J."/>
            <person name="Wong G.K.-S."/>
            <person name="Yang H."/>
        </authorList>
    </citation>
    <scope>NUCLEOTIDE SEQUENCE [LARGE SCALE GENOMIC DNA]</scope>
    <source>
        <strain>cv. Nipponbare</strain>
    </source>
</reference>
<reference key="6">
    <citation type="journal article" date="2005" name="Plant Cell Physiol.">
        <title>Genome-wide identification of the rice calcium-dependent protein kinase and its closely related kinase gene families: comprehensive analysis of the CDPKs gene family in rice.</title>
        <authorList>
            <person name="Asano T."/>
            <person name="Tanaka N."/>
            <person name="Yang G."/>
            <person name="Hayashi N."/>
            <person name="Komatsu S."/>
        </authorList>
    </citation>
    <scope>GENE FAMILY</scope>
    <scope>NOMENCLATURE</scope>
</reference>
<accession>B9FKW9</accession>
<accession>A0A0P0WNV0</accession>
<accession>Q0DH47</accession>
<accession>Q6F339</accession>